<protein>
    <recommendedName>
        <fullName>Gene 20 protein</fullName>
    </recommendedName>
    <alternativeName>
        <fullName>Gp20</fullName>
    </alternativeName>
</protein>
<keyword id="KW-1185">Reference proteome</keyword>
<name>VG20_BPML5</name>
<organismHost>
    <name type="scientific">Mycobacterium</name>
    <dbReference type="NCBI Taxonomy" id="1763"/>
</organismHost>
<proteinExistence type="predicted"/>
<dbReference type="EMBL" id="Z18946">
    <property type="protein sequence ID" value="CAA79396.1"/>
    <property type="molecule type" value="Genomic_DNA"/>
</dbReference>
<dbReference type="PIR" id="S30965">
    <property type="entry name" value="S30965"/>
</dbReference>
<dbReference type="RefSeq" id="NP_039684.1">
    <property type="nucleotide sequence ID" value="NC_001335.1"/>
</dbReference>
<dbReference type="SMR" id="Q05226"/>
<dbReference type="GeneID" id="2942924"/>
<dbReference type="KEGG" id="vg:2942924"/>
<dbReference type="OrthoDB" id="13366at10239"/>
<dbReference type="Proteomes" id="UP000002123">
    <property type="component" value="Genome"/>
</dbReference>
<accession>Q05226</accession>
<organism>
    <name type="scientific">Mycobacterium phage L5</name>
    <name type="common">Mycobacteriophage L5</name>
    <dbReference type="NCBI Taxonomy" id="31757"/>
    <lineage>
        <taxon>Viruses</taxon>
        <taxon>Duplodnaviria</taxon>
        <taxon>Heunggongvirae</taxon>
        <taxon>Uroviricota</taxon>
        <taxon>Caudoviricetes</taxon>
        <taxon>Fromanvirus</taxon>
    </lineage>
</organism>
<gene>
    <name type="primary">20</name>
</gene>
<feature type="chain" id="PRO_0000164729" description="Gene 20 protein">
    <location>
        <begin position="1"/>
        <end position="122"/>
    </location>
</feature>
<reference key="1">
    <citation type="journal article" date="1993" name="Mol. Microbiol.">
        <title>DNA sequence, structure and gene expression of mycobacteriophage L5: a phage system for mycobacterial genetics.</title>
        <authorList>
            <person name="Hatfull G.F."/>
            <person name="Sarkis G.J."/>
        </authorList>
    </citation>
    <scope>NUCLEOTIDE SEQUENCE [LARGE SCALE GENOMIC DNA]</scope>
</reference>
<sequence length="122" mass="13960">MSLLDTGARYQTCIVYPEEMVIDSDGNKRTRPSNTGIPAIARFQVANQSGTSARRAEQDNEGFETEKVYRMRFPRSFTKEHGILGAQSQIEWRDQRWALFGDATVYDSSPALARVDYTIKRY</sequence>